<reference key="1">
    <citation type="journal article" date="2008" name="PLoS Genet.">
        <title>Genomic islands in the pathogenic filamentous fungus Aspergillus fumigatus.</title>
        <authorList>
            <person name="Fedorova N.D."/>
            <person name="Khaldi N."/>
            <person name="Joardar V.S."/>
            <person name="Maiti R."/>
            <person name="Amedeo P."/>
            <person name="Anderson M.J."/>
            <person name="Crabtree J."/>
            <person name="Silva J.C."/>
            <person name="Badger J.H."/>
            <person name="Albarraq A."/>
            <person name="Angiuoli S."/>
            <person name="Bussey H."/>
            <person name="Bowyer P."/>
            <person name="Cotty P.J."/>
            <person name="Dyer P.S."/>
            <person name="Egan A."/>
            <person name="Galens K."/>
            <person name="Fraser-Liggett C.M."/>
            <person name="Haas B.J."/>
            <person name="Inman J.M."/>
            <person name="Kent R."/>
            <person name="Lemieux S."/>
            <person name="Malavazi I."/>
            <person name="Orvis J."/>
            <person name="Roemer T."/>
            <person name="Ronning C.M."/>
            <person name="Sundaram J.P."/>
            <person name="Sutton G."/>
            <person name="Turner G."/>
            <person name="Venter J.C."/>
            <person name="White O.R."/>
            <person name="Whitty B.R."/>
            <person name="Youngman P."/>
            <person name="Wolfe K.H."/>
            <person name="Goldman G.H."/>
            <person name="Wortman J.R."/>
            <person name="Jiang B."/>
            <person name="Denning D.W."/>
            <person name="Nierman W.C."/>
        </authorList>
    </citation>
    <scope>NUCLEOTIDE SEQUENCE [LARGE SCALE GENOMIC DNA]</scope>
    <source>
        <strain>ATCC 1020 / DSM 3700 / CBS 544.65 / FGSC A1164 / JCM 1740 / NRRL 181 / WB 181</strain>
    </source>
</reference>
<dbReference type="EC" id="4.2.2.2"/>
<dbReference type="EMBL" id="DS027698">
    <property type="protein sequence ID" value="EAW16671.1"/>
    <property type="molecule type" value="Genomic_DNA"/>
</dbReference>
<dbReference type="RefSeq" id="XP_001258568.1">
    <property type="nucleotide sequence ID" value="XM_001258567.1"/>
</dbReference>
<dbReference type="SMR" id="A1DPF0"/>
<dbReference type="GlyCosmos" id="A1DPF0">
    <property type="glycosylation" value="4 sites, No reported glycans"/>
</dbReference>
<dbReference type="EnsemblFungi" id="EAW16671">
    <property type="protein sequence ID" value="EAW16671"/>
    <property type="gene ID" value="NFIA_060270"/>
</dbReference>
<dbReference type="GeneID" id="4585084"/>
<dbReference type="KEGG" id="nfi:NFIA_060270"/>
<dbReference type="VEuPathDB" id="FungiDB:NFIA_060270"/>
<dbReference type="eggNOG" id="ENOG502QW7I">
    <property type="taxonomic scope" value="Eukaryota"/>
</dbReference>
<dbReference type="HOGENOM" id="CLU_016764_1_1_1"/>
<dbReference type="OMA" id="GIHSMGT"/>
<dbReference type="OrthoDB" id="302705at2759"/>
<dbReference type="Proteomes" id="UP000006702">
    <property type="component" value="Unassembled WGS sequence"/>
</dbReference>
<dbReference type="GO" id="GO:0005576">
    <property type="term" value="C:extracellular region"/>
    <property type="evidence" value="ECO:0007669"/>
    <property type="project" value="UniProtKB-SubCell"/>
</dbReference>
<dbReference type="GO" id="GO:0046872">
    <property type="term" value="F:metal ion binding"/>
    <property type="evidence" value="ECO:0007669"/>
    <property type="project" value="UniProtKB-KW"/>
</dbReference>
<dbReference type="GO" id="GO:0030570">
    <property type="term" value="F:pectate lyase activity"/>
    <property type="evidence" value="ECO:0007669"/>
    <property type="project" value="UniProtKB-EC"/>
</dbReference>
<dbReference type="GO" id="GO:0071555">
    <property type="term" value="P:cell wall organization"/>
    <property type="evidence" value="ECO:0007669"/>
    <property type="project" value="UniProtKB-KW"/>
</dbReference>
<dbReference type="GO" id="GO:0000272">
    <property type="term" value="P:polysaccharide catabolic process"/>
    <property type="evidence" value="ECO:0007669"/>
    <property type="project" value="UniProtKB-KW"/>
</dbReference>
<dbReference type="Gene3D" id="2.160.20.10">
    <property type="entry name" value="Single-stranded right-handed beta-helix, Pectin lyase-like"/>
    <property type="match status" value="1"/>
</dbReference>
<dbReference type="InterPro" id="IPR018247">
    <property type="entry name" value="EF_Hand_1_Ca_BS"/>
</dbReference>
<dbReference type="InterPro" id="IPR012334">
    <property type="entry name" value="Pectin_lyas_fold"/>
</dbReference>
<dbReference type="InterPro" id="IPR011050">
    <property type="entry name" value="Pectin_lyase_fold/virulence"/>
</dbReference>
<dbReference type="InterPro" id="IPR052063">
    <property type="entry name" value="Polysaccharide_Lyase_1"/>
</dbReference>
<dbReference type="PANTHER" id="PTHR42970">
    <property type="entry name" value="PECTATE LYASE C-RELATED"/>
    <property type="match status" value="1"/>
</dbReference>
<dbReference type="PANTHER" id="PTHR42970:SF1">
    <property type="entry name" value="PECTATE LYASE C-RELATED"/>
    <property type="match status" value="1"/>
</dbReference>
<dbReference type="Pfam" id="PF18884">
    <property type="entry name" value="TSP3_bac"/>
    <property type="match status" value="1"/>
</dbReference>
<dbReference type="SUPFAM" id="SSF51126">
    <property type="entry name" value="Pectin lyase-like"/>
    <property type="match status" value="1"/>
</dbReference>
<dbReference type="PROSITE" id="PS00018">
    <property type="entry name" value="EF_HAND_1"/>
    <property type="match status" value="1"/>
</dbReference>
<sequence>MKLSAPLLVSLAAFSQAVTALVAFPGAEGFGADAIGGRKGQVYVVTNLNDSGTGSLRDAVSATDRIVVFAVGGVIKISERIVVSKRVTILGQTAPGDGITVYGNGWSFSNADDAIVRYIRIRMGKGGSSGKDAMGIAEGNRMIFDHVSVSWGRDETFSINGDASNITVQNSIIAQGLETHSCGGLIQTDGGVSLFRNLYIDNKTRNPKVKGVNEFTNNVVYNWGGGGGYIAGDSDGQSYANIIGNYFISGPSTSVTAFTRGNANFHGYVDNNYYDPDKDGQLDGSELGVSSSNYGGMAIVSSKYNYPAVAYTMSPAEAVTYVTKYAGASKVRDSVDTQLIAQVQSWGTKGALISDEATMGGPGTLNGGTPAKDTDGDGIPDEAEKQLGTDPNTNDSMKLHSSGYTYLEVWANSLVPSTYH</sequence>
<accession>A1DPF0</accession>
<feature type="signal peptide" evidence="2">
    <location>
        <begin position="1"/>
        <end position="20"/>
    </location>
</feature>
<feature type="chain" id="PRO_0000394574" description="Probable pectate lyase C">
    <location>
        <begin position="21"/>
        <end position="420"/>
    </location>
</feature>
<feature type="domain" description="EF-hand">
    <location>
        <begin position="262"/>
        <end position="297"/>
    </location>
</feature>
<feature type="region of interest" description="Disordered" evidence="4">
    <location>
        <begin position="357"/>
        <end position="395"/>
    </location>
</feature>
<feature type="active site" evidence="2">
    <location>
        <position position="205"/>
    </location>
</feature>
<feature type="binding site" evidence="3">
    <location>
        <position position="275"/>
    </location>
    <ligand>
        <name>Ca(2+)</name>
        <dbReference type="ChEBI" id="CHEBI:29108"/>
    </ligand>
</feature>
<feature type="binding site" evidence="3">
    <location>
        <position position="277"/>
    </location>
    <ligand>
        <name>Ca(2+)</name>
        <dbReference type="ChEBI" id="CHEBI:29108"/>
    </ligand>
</feature>
<feature type="binding site" evidence="3">
    <location>
        <position position="279"/>
    </location>
    <ligand>
        <name>Ca(2+)</name>
        <dbReference type="ChEBI" id="CHEBI:29108"/>
    </ligand>
</feature>
<feature type="binding site" evidence="3">
    <location>
        <position position="281"/>
    </location>
    <ligand>
        <name>Ca(2+)</name>
        <dbReference type="ChEBI" id="CHEBI:29108"/>
    </ligand>
</feature>
<feature type="binding site" evidence="3">
    <location>
        <position position="286"/>
    </location>
    <ligand>
        <name>Ca(2+)</name>
        <dbReference type="ChEBI" id="CHEBI:29108"/>
    </ligand>
</feature>
<feature type="glycosylation site" description="N-linked (GlcNAc...) asparagine" evidence="2">
    <location>
        <position position="49"/>
    </location>
</feature>
<feature type="glycosylation site" description="N-linked (GlcNAc...) asparagine" evidence="2">
    <location>
        <position position="165"/>
    </location>
</feature>
<feature type="glycosylation site" description="N-linked (GlcNAc...) asparagine" evidence="2">
    <location>
        <position position="202"/>
    </location>
</feature>
<feature type="glycosylation site" description="N-linked (GlcNAc...) asparagine" evidence="2">
    <location>
        <position position="394"/>
    </location>
</feature>
<evidence type="ECO:0000250" key="1"/>
<evidence type="ECO:0000255" key="2"/>
<evidence type="ECO:0000255" key="3">
    <source>
        <dbReference type="PROSITE-ProRule" id="PRU10142"/>
    </source>
</evidence>
<evidence type="ECO:0000256" key="4">
    <source>
        <dbReference type="SAM" id="MobiDB-lite"/>
    </source>
</evidence>
<evidence type="ECO:0000305" key="5"/>
<proteinExistence type="inferred from homology"/>
<gene>
    <name type="primary">plyC</name>
    <name type="ORF">NFIA_060270</name>
</gene>
<name>PLYC_NEOFI</name>
<keyword id="KW-0106">Calcium</keyword>
<keyword id="KW-0119">Carbohydrate metabolism</keyword>
<keyword id="KW-0961">Cell wall biogenesis/degradation</keyword>
<keyword id="KW-0325">Glycoprotein</keyword>
<keyword id="KW-0456">Lyase</keyword>
<keyword id="KW-0479">Metal-binding</keyword>
<keyword id="KW-0624">Polysaccharide degradation</keyword>
<keyword id="KW-1185">Reference proteome</keyword>
<keyword id="KW-0964">Secreted</keyword>
<keyword id="KW-0732">Signal</keyword>
<comment type="function">
    <text evidence="1">Pectinolytic enzyme consist of four classes of enzymes: pectin lyase, polygalacturonase, pectin methylesterase and rhamnogalacturonase. Among pectinolytic enzymes, pectin lyase is the most important in depolymerization of pectin, since it cleaves internal glycosidic bonds of highly methylated pectins. Favors pectate, the anion, over pectin, the methyl ester (By similarity).</text>
</comment>
<comment type="catalytic activity">
    <reaction>
        <text>Eliminative cleavage of (1-&gt;4)-alpha-D-galacturonan to give oligosaccharides with 4-deoxy-alpha-D-galact-4-enuronosyl groups at their non-reducing ends.</text>
        <dbReference type="EC" id="4.2.2.2"/>
    </reaction>
</comment>
<comment type="cofactor">
    <cofactor evidence="1">
        <name>Ca(2+)</name>
        <dbReference type="ChEBI" id="CHEBI:29108"/>
    </cofactor>
    <text evidence="1">Binds 1 Ca(2+) ion per subunit.</text>
</comment>
<comment type="subcellular location">
    <subcellularLocation>
        <location evidence="1">Secreted</location>
    </subcellularLocation>
</comment>
<comment type="similarity">
    <text evidence="5">Belongs to the polysaccharide lyase 1 family.</text>
</comment>
<organism>
    <name type="scientific">Neosartorya fischeri (strain ATCC 1020 / DSM 3700 / CBS 544.65 / FGSC A1164 / JCM 1740 / NRRL 181 / WB 181)</name>
    <name type="common">Aspergillus fischerianus</name>
    <dbReference type="NCBI Taxonomy" id="331117"/>
    <lineage>
        <taxon>Eukaryota</taxon>
        <taxon>Fungi</taxon>
        <taxon>Dikarya</taxon>
        <taxon>Ascomycota</taxon>
        <taxon>Pezizomycotina</taxon>
        <taxon>Eurotiomycetes</taxon>
        <taxon>Eurotiomycetidae</taxon>
        <taxon>Eurotiales</taxon>
        <taxon>Aspergillaceae</taxon>
        <taxon>Aspergillus</taxon>
        <taxon>Aspergillus subgen. Fumigati</taxon>
    </lineage>
</organism>
<protein>
    <recommendedName>
        <fullName>Probable pectate lyase C</fullName>
        <ecNumber>4.2.2.2</ecNumber>
    </recommendedName>
</protein>